<accession>Q9GSA4</accession>
<sequence>MATNITMFLIVITLTSVAAQTFQYSRGWTNGKRDGHKTEDIRDLTNNLERILSPCQMNKLKYVLEGKPLNERLLGPCDTSKTRSTTNPSDTNTSAVKTPCSTHFNKHCYSFSY</sequence>
<reference evidence="6 7" key="1">
    <citation type="journal article" date="2001" name="Insect Mol. Biol.">
        <title>Corazonin gene expression in the waxmoth Galleria mellonella.</title>
        <authorList>
            <person name="Hansen I.A."/>
            <person name="Sehnal F."/>
            <person name="Meyer S.R."/>
            <person name="Scheller K."/>
        </authorList>
    </citation>
    <scope>NUCLEOTIDE SEQUENCE [MRNA]</scope>
    <scope>PROTEIN SEQUENCE OF 20-30</scope>
    <scope>TISSUE SPECIFICITY</scope>
    <scope>AMIDATION AT ASN-30</scope>
    <source>
        <tissue evidence="7">Brain</tissue>
    </source>
</reference>
<comment type="function">
    <text evidence="2">Cardioactive peptide. Corazonin is probably involved in the physiological regulation of the heart beat (By similarity).</text>
</comment>
<comment type="subcellular location">
    <molecule>Corazonin</molecule>
    <subcellularLocation>
        <location evidence="5">Secreted</location>
    </subcellularLocation>
</comment>
<comment type="subcellular location">
    <molecule>Corazonin precursor-related peptide</molecule>
    <subcellularLocation>
        <location evidence="1">Secreted</location>
    </subcellularLocation>
</comment>
<comment type="tissue specificity">
    <text evidence="5">Four pairs of lateral neurosecretory cells in the brains of late instar larvae, pupae and adults.</text>
</comment>
<comment type="similarity">
    <text evidence="6">Belongs to the corazonin family.</text>
</comment>
<dbReference type="EMBL" id="AY004866">
    <property type="protein sequence ID" value="AAF87082.1"/>
    <property type="molecule type" value="mRNA"/>
</dbReference>
<dbReference type="FunCoup" id="Q9GSA4">
    <property type="interactions" value="27"/>
</dbReference>
<dbReference type="InParanoid" id="Q9GSA4"/>
<dbReference type="OrthoDB" id="6436322at2759"/>
<dbReference type="Proteomes" id="UP000504614">
    <property type="component" value="Unplaced"/>
</dbReference>
<dbReference type="GO" id="GO:0005576">
    <property type="term" value="C:extracellular region"/>
    <property type="evidence" value="ECO:0000250"/>
    <property type="project" value="UniProtKB"/>
</dbReference>
<dbReference type="GO" id="GO:0071858">
    <property type="term" value="F:corazonin receptor binding"/>
    <property type="evidence" value="ECO:0007669"/>
    <property type="project" value="InterPro"/>
</dbReference>
<dbReference type="GO" id="GO:0005184">
    <property type="term" value="F:neuropeptide hormone activity"/>
    <property type="evidence" value="ECO:0000250"/>
    <property type="project" value="UniProtKB"/>
</dbReference>
<dbReference type="GO" id="GO:0007218">
    <property type="term" value="P:neuropeptide signaling pathway"/>
    <property type="evidence" value="ECO:0007669"/>
    <property type="project" value="UniProtKB-KW"/>
</dbReference>
<dbReference type="GO" id="GO:0045823">
    <property type="term" value="P:positive regulation of heart contraction"/>
    <property type="evidence" value="ECO:0000250"/>
    <property type="project" value="UniProtKB"/>
</dbReference>
<dbReference type="InterPro" id="IPR020190">
    <property type="entry name" value="Procorazonin"/>
</dbReference>
<dbReference type="Pfam" id="PF17308">
    <property type="entry name" value="Corazonin"/>
    <property type="match status" value="1"/>
</dbReference>
<organism>
    <name type="scientific">Galleria mellonella</name>
    <name type="common">Greater wax moth</name>
    <dbReference type="NCBI Taxonomy" id="7137"/>
    <lineage>
        <taxon>Eukaryota</taxon>
        <taxon>Metazoa</taxon>
        <taxon>Ecdysozoa</taxon>
        <taxon>Arthropoda</taxon>
        <taxon>Hexapoda</taxon>
        <taxon>Insecta</taxon>
        <taxon>Pterygota</taxon>
        <taxon>Neoptera</taxon>
        <taxon>Endopterygota</taxon>
        <taxon>Lepidoptera</taxon>
        <taxon>Glossata</taxon>
        <taxon>Ditrysia</taxon>
        <taxon>Pyraloidea</taxon>
        <taxon>Pyralidae</taxon>
        <taxon>Galleriinae</taxon>
        <taxon>Galleria</taxon>
    </lineage>
</organism>
<evidence type="ECO:0000250" key="1"/>
<evidence type="ECO:0000250" key="2">
    <source>
        <dbReference type="UniProtKB" id="Q26377"/>
    </source>
</evidence>
<evidence type="ECO:0000255" key="3"/>
<evidence type="ECO:0000256" key="4">
    <source>
        <dbReference type="SAM" id="MobiDB-lite"/>
    </source>
</evidence>
<evidence type="ECO:0000269" key="5">
    <source>
    </source>
</evidence>
<evidence type="ECO:0000305" key="6"/>
<evidence type="ECO:0000312" key="7">
    <source>
        <dbReference type="EMBL" id="AAF87082.1"/>
    </source>
</evidence>
<name>CORZ_GALME</name>
<proteinExistence type="evidence at protein level"/>
<gene>
    <name evidence="7" type="primary">crz</name>
</gene>
<protein>
    <recommendedName>
        <fullName>Pro-corazonin</fullName>
        <shortName>Crz</shortName>
    </recommendedName>
    <component>
        <recommendedName>
            <fullName>Corazonin</fullName>
        </recommendedName>
    </component>
    <component>
        <recommendedName>
            <fullName>Corazonin precursor-related peptide</fullName>
            <shortName>CPRP</shortName>
        </recommendedName>
    </component>
</protein>
<feature type="signal peptide" evidence="5">
    <location>
        <begin position="1"/>
        <end position="19"/>
    </location>
</feature>
<feature type="chain" id="PRO_0000341614" description="Pro-corazonin" evidence="3">
    <location>
        <begin position="20"/>
        <end position="113"/>
    </location>
</feature>
<feature type="peptide" id="PRO_0000000951" description="Corazonin" evidence="5">
    <location>
        <begin position="20"/>
        <end position="30"/>
    </location>
</feature>
<feature type="peptide" id="PRO_0000000952" description="Corazonin precursor-related peptide">
    <location>
        <begin position="34"/>
        <end position="113"/>
    </location>
</feature>
<feature type="region of interest" description="Disordered" evidence="4">
    <location>
        <begin position="74"/>
        <end position="96"/>
    </location>
</feature>
<feature type="compositionally biased region" description="Polar residues" evidence="4">
    <location>
        <begin position="82"/>
        <end position="96"/>
    </location>
</feature>
<feature type="modified residue" description="Pyrrolidone carboxylic acid" evidence="2">
    <location>
        <position position="20"/>
    </location>
</feature>
<feature type="modified residue" description="Asparagine amide" evidence="5">
    <location>
        <position position="30"/>
    </location>
</feature>
<keyword id="KW-0027">Amidation</keyword>
<keyword id="KW-0165">Cleavage on pair of basic residues</keyword>
<keyword id="KW-0903">Direct protein sequencing</keyword>
<keyword id="KW-0527">Neuropeptide</keyword>
<keyword id="KW-0873">Pyrrolidone carboxylic acid</keyword>
<keyword id="KW-1185">Reference proteome</keyword>
<keyword id="KW-0964">Secreted</keyword>
<keyword id="KW-0732">Signal</keyword>